<protein>
    <recommendedName>
        <fullName evidence="9">Phospholipid phosphatase 2</fullName>
        <ecNumber evidence="6 7">3.1.3.-</ecNumber>
        <ecNumber evidence="4 6 7">3.1.3.4</ecNumber>
    </recommendedName>
    <alternativeName>
        <fullName>Lipid phosphate phosphohydrolase 2</fullName>
    </alternativeName>
    <alternativeName>
        <fullName>PAP2-gamma</fullName>
        <shortName>PAP2-G</shortName>
    </alternativeName>
    <alternativeName>
        <fullName evidence="8">Phosphatidate phosphohydrolase type 2c</fullName>
    </alternativeName>
    <alternativeName>
        <fullName evidence="8">Phosphatidic acid phosphatase 2c</fullName>
        <shortName evidence="8">PAP-2c</shortName>
        <shortName evidence="8">PAP2c</shortName>
    </alternativeName>
</protein>
<comment type="function">
    <text evidence="2 4 6 7 10">Magnesium-independent phospholipid phosphatase that catalyzes the dephosphorylation of a variety of glycerolipid and sphingolipid phosphate esters including phosphatidate/PA, lysophosphatidate/LPA, sphingosine 1-phosphate/S1P and ceramide 1-phosphate/C1P (PubMed:16467304, PubMed:9607309, PubMed:9705349). Has no apparent extracellular phosphatase activity and therefore most probably acts intracellularly (PubMed:16467304). Also acts on N-oleoyl ethanolamine phosphate/N-(9Z-octadecenoyl)-ethanolamine phosphate, a potential physiological compound (PubMed:9607309). Through dephosphorylation of these bioactive lipid mediators produces new bioactive compounds and may regulate signal transduction in different cellular processes (Probable). Indirectly regulates, for instance, cell cycle G1/S phase transition through its phospholipid phosphatase activity (By similarity).</text>
</comment>
<comment type="catalytic activity">
    <reaction evidence="4 6 7">
        <text>a 1,2-diacyl-sn-glycero-3-phosphate + H2O = a 1,2-diacyl-sn-glycerol + phosphate</text>
        <dbReference type="Rhea" id="RHEA:27429"/>
        <dbReference type="ChEBI" id="CHEBI:15377"/>
        <dbReference type="ChEBI" id="CHEBI:17815"/>
        <dbReference type="ChEBI" id="CHEBI:43474"/>
        <dbReference type="ChEBI" id="CHEBI:58608"/>
        <dbReference type="EC" id="3.1.3.4"/>
    </reaction>
    <physiologicalReaction direction="left-to-right" evidence="12">
        <dbReference type="Rhea" id="RHEA:27430"/>
    </physiologicalReaction>
</comment>
<comment type="catalytic activity">
    <reaction evidence="7">
        <text>1,2-dihexadecanoyl-sn-glycero-3-phosphate + H2O = 1,2-dihexadecanoyl-sn-glycerol + phosphate</text>
        <dbReference type="Rhea" id="RHEA:43236"/>
        <dbReference type="ChEBI" id="CHEBI:15377"/>
        <dbReference type="ChEBI" id="CHEBI:43474"/>
        <dbReference type="ChEBI" id="CHEBI:72859"/>
        <dbReference type="ChEBI" id="CHEBI:82929"/>
    </reaction>
    <physiologicalReaction direction="left-to-right" evidence="12">
        <dbReference type="Rhea" id="RHEA:43237"/>
    </physiologicalReaction>
</comment>
<comment type="catalytic activity">
    <reaction evidence="6">
        <text>1,2-di-(9Z-octadecenoyl)-sn-glycero-3-phosphate + H2O = 1,2-di-(9Z-octadecenoyl)-sn-glycerol + phosphate</text>
        <dbReference type="Rhea" id="RHEA:43244"/>
        <dbReference type="ChEBI" id="CHEBI:15377"/>
        <dbReference type="ChEBI" id="CHEBI:43474"/>
        <dbReference type="ChEBI" id="CHEBI:52333"/>
        <dbReference type="ChEBI" id="CHEBI:74546"/>
    </reaction>
    <physiologicalReaction direction="left-to-right" evidence="11">
        <dbReference type="Rhea" id="RHEA:43245"/>
    </physiologicalReaction>
</comment>
<comment type="catalytic activity">
    <reaction evidence="6 7">
        <text>a monoacyl-sn-glycero-3-phosphate + H2O = a monoacylglycerol + phosphate</text>
        <dbReference type="Rhea" id="RHEA:46736"/>
        <dbReference type="ChEBI" id="CHEBI:15377"/>
        <dbReference type="ChEBI" id="CHEBI:17408"/>
        <dbReference type="ChEBI" id="CHEBI:43474"/>
        <dbReference type="ChEBI" id="CHEBI:77589"/>
    </reaction>
    <physiologicalReaction direction="left-to-right" evidence="12">
        <dbReference type="Rhea" id="RHEA:46737"/>
    </physiologicalReaction>
</comment>
<comment type="catalytic activity">
    <reaction evidence="6 7">
        <text>(9Z)-octadecenoyl-sn-glycero-3-phosphate + H2O = (9Z-octadecenoyl)-glycerol + phosphate</text>
        <dbReference type="Rhea" id="RHEA:50884"/>
        <dbReference type="ChEBI" id="CHEBI:15377"/>
        <dbReference type="ChEBI" id="CHEBI:43474"/>
        <dbReference type="ChEBI" id="CHEBI:75937"/>
        <dbReference type="ChEBI" id="CHEBI:84973"/>
    </reaction>
    <physiologicalReaction direction="left-to-right" evidence="12">
        <dbReference type="Rhea" id="RHEA:50885"/>
    </physiologicalReaction>
</comment>
<comment type="catalytic activity">
    <reaction evidence="7">
        <text>sphing-4-enine 1-phosphate + H2O = sphing-4-enine + phosphate</text>
        <dbReference type="Rhea" id="RHEA:27518"/>
        <dbReference type="ChEBI" id="CHEBI:15377"/>
        <dbReference type="ChEBI" id="CHEBI:43474"/>
        <dbReference type="ChEBI" id="CHEBI:57756"/>
        <dbReference type="ChEBI" id="CHEBI:60119"/>
    </reaction>
    <physiologicalReaction direction="left-to-right" evidence="12">
        <dbReference type="Rhea" id="RHEA:27519"/>
    </physiologicalReaction>
</comment>
<comment type="catalytic activity">
    <reaction evidence="7">
        <text>an N-acylsphing-4-enine 1-phosphate + H2O = an N-acylsphing-4-enine + phosphate</text>
        <dbReference type="Rhea" id="RHEA:33743"/>
        <dbReference type="ChEBI" id="CHEBI:15377"/>
        <dbReference type="ChEBI" id="CHEBI:43474"/>
        <dbReference type="ChEBI" id="CHEBI:52639"/>
        <dbReference type="ChEBI" id="CHEBI:57674"/>
    </reaction>
    <physiologicalReaction direction="left-to-right" evidence="12">
        <dbReference type="Rhea" id="RHEA:33744"/>
    </physiologicalReaction>
</comment>
<comment type="catalytic activity">
    <reaction evidence="7">
        <text>N-(octanoyl)-sphing-4-enine-1-phosphate + H2O = N-octanoylsphing-4-enine + phosphate</text>
        <dbReference type="Rhea" id="RHEA:62040"/>
        <dbReference type="ChEBI" id="CHEBI:15377"/>
        <dbReference type="ChEBI" id="CHEBI:43474"/>
        <dbReference type="ChEBI" id="CHEBI:45815"/>
        <dbReference type="ChEBI" id="CHEBI:85376"/>
    </reaction>
    <physiologicalReaction direction="left-to-right" evidence="12">
        <dbReference type="Rhea" id="RHEA:62041"/>
    </physiologicalReaction>
</comment>
<comment type="catalytic activity">
    <reaction evidence="6">
        <text>N-(9Z-octadecenoyl)-ethanolamine phosphate + H2O = N-(9Z-octadecenoyl) ethanolamine + phosphate</text>
        <dbReference type="Rhea" id="RHEA:62160"/>
        <dbReference type="ChEBI" id="CHEBI:15377"/>
        <dbReference type="ChEBI" id="CHEBI:43474"/>
        <dbReference type="ChEBI" id="CHEBI:71466"/>
        <dbReference type="ChEBI" id="CHEBI:145465"/>
    </reaction>
    <physiologicalReaction direction="left-to-right" evidence="11">
        <dbReference type="Rhea" id="RHEA:62161"/>
    </physiologicalReaction>
</comment>
<comment type="activity regulation">
    <text evidence="6 7">Magnesium-independent phospholipid phosphatase (PubMed:9705349). Insensitive to N-ethylmaleimide (PubMed:9705349). Inhibited by sphingosine, zinc ions and modestly by propanolol (PubMed:9607309, PubMed:9705349).</text>
</comment>
<comment type="biophysicochemical properties">
    <kinetics>
        <KM evidence="6">150 uM for 1,2-di-(9Z-octadecenoyl)-sn-glycero-3-phosphate</KM>
        <KM evidence="6">340 uM for (9Z)-octadecenoyl-sn-glycero-3-phosphate</KM>
        <KM evidence="6">138 uM for N-oleoyl ethanolamine phosphatidic acid</KM>
        <Vmax evidence="7">0.15 nmol/min/mg enzyme with 1,2-dihexadecanoyl-sn-glycero-3-phosphate as substrate</Vmax>
        <Vmax evidence="7">0.2 nmol/min/mg enzyme with (9Z)-octadecenoyl-sn-glycero-3-phosphate as substrate</Vmax>
        <Vmax evidence="7">0.17 nmol/min/mg enzyme with N-(octanoyl)-sphing-4-enine-1-phosphate as substrate</Vmax>
        <Vmax evidence="7">0.69 nmol/min/mg enzyme with sphing-4-enine 1-phosphate as substrate</Vmax>
        <Vmax evidence="6">34.0 nmol/min/mg enzyme with 1,2-di-(9Z-octadecenoyl)-sn-glycero-3-phosphate as substrate</Vmax>
        <Vmax evidence="6">49.0 nmol/min/mg enzyme with (9Z)-octadecenoyl-sn-glycero-3-phosphate as substrate</Vmax>
        <Vmax evidence="6">17.0 nmol/min/mg enzyme with N-oleoyl ethanolamine phosphatidic acid as substrate</Vmax>
    </kinetics>
</comment>
<comment type="pathway">
    <text evidence="4 6 7">Lipid metabolism; phospholipid metabolism.</text>
</comment>
<comment type="subunit">
    <text evidence="5">Forms functional homodimers and homooligomers (PubMed:18215144). Can also form heterooligomers with PLPP1 and PLPP3 (PubMed:18215144).</text>
</comment>
<comment type="interaction">
    <interactant intactId="EBI-722017">
        <id>O43688</id>
    </interactant>
    <interactant intactId="EBI-12690684">
        <id>P41235-3</id>
        <label>HNF4A</label>
    </interactant>
    <organismsDiffer>false</organismsDiffer>
    <experiments>3</experiments>
</comment>
<comment type="interaction">
    <interactant intactId="EBI-722017">
        <id>O43688</id>
    </interactant>
    <interactant intactId="EBI-10266796">
        <id>Q8N5M9</id>
        <label>JAGN1</label>
    </interactant>
    <organismsDiffer>false</organismsDiffer>
    <experiments>3</experiments>
</comment>
<comment type="interaction">
    <interactant intactId="EBI-722017">
        <id>O43688</id>
    </interactant>
    <interactant intactId="EBI-945833">
        <id>Q7Z3S9</id>
        <label>NOTCH2NLA</label>
    </interactant>
    <organismsDiffer>false</organismsDiffer>
    <experiments>3</experiments>
</comment>
<comment type="interaction">
    <interactant intactId="EBI-722017">
        <id>O43688</id>
    </interactant>
    <interactant intactId="EBI-6380741">
        <id>P42857</id>
        <label>NSG1</label>
    </interactant>
    <organismsDiffer>false</organismsDiffer>
    <experiments>3</experiments>
</comment>
<comment type="interaction">
    <interactant intactId="EBI-722017">
        <id>O43688</id>
    </interactant>
    <interactant intactId="EBI-11996766">
        <id>Q8N609</id>
        <label>TRAM1L1</label>
    </interactant>
    <organismsDiffer>false</organismsDiffer>
    <experiments>3</experiments>
</comment>
<comment type="interaction">
    <interactant intactId="EBI-722017">
        <id>O43688</id>
    </interactant>
    <interactant intactId="EBI-12190699">
        <id>Q6UX27-3</id>
        <label>VSTM1</label>
    </interactant>
    <organismsDiffer>false</organismsDiffer>
    <experiments>3</experiments>
</comment>
<comment type="subcellular location">
    <subcellularLocation>
        <location evidence="4 7">Membrane</location>
        <topology evidence="3">Multi-pass membrane protein</topology>
    </subcellularLocation>
    <subcellularLocation>
        <location evidence="4 7">Cell membrane</location>
        <topology evidence="3">Multi-pass membrane protein</topology>
    </subcellularLocation>
    <subcellularLocation>
        <location evidence="4">Early endosome membrane</location>
        <topology evidence="3">Multi-pass membrane protein</topology>
    </subcellularLocation>
    <subcellularLocation>
        <location evidence="4">Endoplasmic reticulum membrane</location>
        <topology evidence="3">Multi-pass membrane protein</topology>
    </subcellularLocation>
</comment>
<comment type="alternative products">
    <event type="alternative splicing"/>
    <isoform>
        <id>O43688-1</id>
        <name>1</name>
        <sequence type="displayed"/>
    </isoform>
    <isoform>
        <id>O43688-2</id>
        <name>2</name>
        <sequence type="described" ref="VSP_037765"/>
    </isoform>
    <isoform>
        <id>O43688-3</id>
        <name>3</name>
        <sequence type="described" ref="VSP_047366"/>
    </isoform>
</comment>
<comment type="tissue specificity">
    <text evidence="6">Found mainly in brain, pancreas and placenta.</text>
</comment>
<comment type="PTM">
    <text evidence="7">N-glycosylated.</text>
</comment>
<comment type="similarity">
    <text evidence="9">Belongs to the PA-phosphatase related phosphoesterase family.</text>
</comment>
<name>PLPP2_HUMAN</name>
<sequence length="288" mass="32574">MQRRWVFVLLDVLCLLVASLPFAILTLVNAPYKRGFYCGDDSIRYPYRPDTITHGLMAGVTITATVILVSAGEAYLVYTDRLYSRSDFNNYVAAVYKVLGTFLFGAAVSQSLTDLAKYMIGRLRPNFLAVCDPDWSRVNCSVYVQLEKVCRGNPADVTEARLSFYSGHSSFGMYCMVFLALYVQARLCWKWARLLRPTVQFFLVAFALYVGYTRVSDYKHHWSDVLVGLLQGALVAALTVCYISDFFKARPPQHCLKEEELERKPSLSLTLTLGEADHNHYGYPHSSS</sequence>
<dbReference type="EC" id="3.1.3.-" evidence="6 7"/>
<dbReference type="EC" id="3.1.3.4" evidence="4 6 7"/>
<dbReference type="EMBL" id="AF035959">
    <property type="protein sequence ID" value="AAC15968.1"/>
    <property type="molecule type" value="mRNA"/>
</dbReference>
<dbReference type="EMBL" id="AF047760">
    <property type="protein sequence ID" value="AAC32104.1"/>
    <property type="molecule type" value="mRNA"/>
</dbReference>
<dbReference type="EMBL" id="AF056083">
    <property type="protein sequence ID" value="AAC25666.1"/>
    <property type="molecule type" value="mRNA"/>
</dbReference>
<dbReference type="EMBL" id="BT007021">
    <property type="protein sequence ID" value="AAP35667.1"/>
    <property type="molecule type" value="mRNA"/>
</dbReference>
<dbReference type="EMBL" id="AC016588">
    <property type="status" value="NOT_ANNOTATED_CDS"/>
    <property type="molecule type" value="Genomic_DNA"/>
</dbReference>
<dbReference type="EMBL" id="BC002806">
    <property type="protein sequence ID" value="AAH02806.1"/>
    <property type="molecule type" value="mRNA"/>
</dbReference>
<dbReference type="CCDS" id="CCDS12023.1">
    <molecule id="O43688-1"/>
</dbReference>
<dbReference type="CCDS" id="CCDS12024.1">
    <molecule id="O43688-2"/>
</dbReference>
<dbReference type="CCDS" id="CCDS45889.1">
    <molecule id="O43688-3"/>
</dbReference>
<dbReference type="RefSeq" id="NP_003703.1">
    <molecule id="O43688-1"/>
    <property type="nucleotide sequence ID" value="NM_003712.4"/>
</dbReference>
<dbReference type="RefSeq" id="NP_803545.1">
    <molecule id="O43688-3"/>
    <property type="nucleotide sequence ID" value="NM_177526.3"/>
</dbReference>
<dbReference type="RefSeq" id="NP_808211.1">
    <molecule id="O43688-2"/>
    <property type="nucleotide sequence ID" value="NM_177543.3"/>
</dbReference>
<dbReference type="BioGRID" id="114170">
    <property type="interactions" value="30"/>
</dbReference>
<dbReference type="FunCoup" id="O43688">
    <property type="interactions" value="706"/>
</dbReference>
<dbReference type="IntAct" id="O43688">
    <property type="interactions" value="19"/>
</dbReference>
<dbReference type="STRING" id="9606.ENSP00000329697"/>
<dbReference type="SwissLipids" id="SLP:000001977"/>
<dbReference type="DEPOD" id="PLPP2"/>
<dbReference type="GlyConnect" id="1460">
    <property type="glycosylation" value="1 N-Linked glycan (1 site)"/>
</dbReference>
<dbReference type="GlyCosmos" id="O43688">
    <property type="glycosylation" value="1 site, 1 glycan"/>
</dbReference>
<dbReference type="GlyGen" id="O43688">
    <property type="glycosylation" value="2 sites, 2 N-linked glycans (1 site), 1 O-linked glycan (1 site)"/>
</dbReference>
<dbReference type="iPTMnet" id="O43688"/>
<dbReference type="PhosphoSitePlus" id="O43688"/>
<dbReference type="SwissPalm" id="O43688"/>
<dbReference type="BioMuta" id="PLPP2"/>
<dbReference type="jPOST" id="O43688"/>
<dbReference type="MassIVE" id="O43688"/>
<dbReference type="PaxDb" id="9606-ENSP00000329697"/>
<dbReference type="PeptideAtlas" id="O43688"/>
<dbReference type="ProteomicsDB" id="19106"/>
<dbReference type="ProteomicsDB" id="49117">
    <molecule id="O43688-1"/>
</dbReference>
<dbReference type="ProteomicsDB" id="49118">
    <molecule id="O43688-2"/>
</dbReference>
<dbReference type="Pumba" id="O43688"/>
<dbReference type="Antibodypedia" id="22287">
    <property type="antibodies" value="157 antibodies from 22 providers"/>
</dbReference>
<dbReference type="DNASU" id="8612"/>
<dbReference type="Ensembl" id="ENST00000269812.7">
    <molecule id="O43688-3"/>
    <property type="protein sequence ID" value="ENSP00000269812.2"/>
    <property type="gene ID" value="ENSG00000141934.10"/>
</dbReference>
<dbReference type="Ensembl" id="ENST00000327790.7">
    <molecule id="O43688-2"/>
    <property type="protein sequence ID" value="ENSP00000329697.1"/>
    <property type="gene ID" value="ENSG00000141934.10"/>
</dbReference>
<dbReference type="Ensembl" id="ENST00000434325.7">
    <molecule id="O43688-1"/>
    <property type="protein sequence ID" value="ENSP00000388565.2"/>
    <property type="gene ID" value="ENSG00000141934.10"/>
</dbReference>
<dbReference type="GeneID" id="8612"/>
<dbReference type="KEGG" id="hsa:8612"/>
<dbReference type="MANE-Select" id="ENST00000434325.7">
    <property type="protein sequence ID" value="ENSP00000388565.2"/>
    <property type="RefSeq nucleotide sequence ID" value="NM_003712.4"/>
    <property type="RefSeq protein sequence ID" value="NP_003703.1"/>
</dbReference>
<dbReference type="UCSC" id="uc002loh.5">
    <molecule id="O43688-1"/>
    <property type="organism name" value="human"/>
</dbReference>
<dbReference type="AGR" id="HGNC:9230"/>
<dbReference type="CTD" id="8612"/>
<dbReference type="DisGeNET" id="8612"/>
<dbReference type="GeneCards" id="PLPP2"/>
<dbReference type="HGNC" id="HGNC:9230">
    <property type="gene designation" value="PLPP2"/>
</dbReference>
<dbReference type="HPA" id="ENSG00000141934">
    <property type="expression patterns" value="Tissue enhanced (salivary)"/>
</dbReference>
<dbReference type="MIM" id="607126">
    <property type="type" value="gene"/>
</dbReference>
<dbReference type="neXtProt" id="NX_O43688"/>
<dbReference type="OpenTargets" id="ENSG00000141934"/>
<dbReference type="PharmGKB" id="PA33554"/>
<dbReference type="VEuPathDB" id="HostDB:ENSG00000141934"/>
<dbReference type="eggNOG" id="KOG3030">
    <property type="taxonomic scope" value="Eukaryota"/>
</dbReference>
<dbReference type="GeneTree" id="ENSGT00940000155885"/>
<dbReference type="InParanoid" id="O43688"/>
<dbReference type="OMA" id="CWRWARL"/>
<dbReference type="OrthoDB" id="9479978at2759"/>
<dbReference type="PAN-GO" id="O43688">
    <property type="GO annotations" value="6 GO annotations based on evolutionary models"/>
</dbReference>
<dbReference type="PhylomeDB" id="O43688"/>
<dbReference type="TreeFam" id="TF316040"/>
<dbReference type="PathwayCommons" id="O43688"/>
<dbReference type="Reactome" id="R-HSA-9845614">
    <property type="pathway name" value="Sphingolipid catabolism"/>
</dbReference>
<dbReference type="SignaLink" id="O43688"/>
<dbReference type="UniPathway" id="UPA00085"/>
<dbReference type="BioGRID-ORCS" id="8612">
    <property type="hits" value="24 hits in 1156 CRISPR screens"/>
</dbReference>
<dbReference type="ChiTaRS" id="PLPP2">
    <property type="organism name" value="human"/>
</dbReference>
<dbReference type="GeneWiki" id="Phosphatidic_acid_phosphatase_2c"/>
<dbReference type="GenomeRNAi" id="8612"/>
<dbReference type="Pharos" id="O43688">
    <property type="development level" value="Tbio"/>
</dbReference>
<dbReference type="PRO" id="PR:O43688"/>
<dbReference type="Proteomes" id="UP000005640">
    <property type="component" value="Chromosome 19"/>
</dbReference>
<dbReference type="RNAct" id="O43688">
    <property type="molecule type" value="protein"/>
</dbReference>
<dbReference type="Bgee" id="ENSG00000141934">
    <property type="expression patterns" value="Expressed in olfactory segment of nasal mucosa and 132 other cell types or tissues"/>
</dbReference>
<dbReference type="ExpressionAtlas" id="O43688">
    <property type="expression patterns" value="baseline and differential"/>
</dbReference>
<dbReference type="GO" id="GO:0005901">
    <property type="term" value="C:caveola"/>
    <property type="evidence" value="ECO:0000314"/>
    <property type="project" value="UniProtKB"/>
</dbReference>
<dbReference type="GO" id="GO:0005769">
    <property type="term" value="C:early endosome"/>
    <property type="evidence" value="ECO:0000314"/>
    <property type="project" value="UniProtKB"/>
</dbReference>
<dbReference type="GO" id="GO:0031901">
    <property type="term" value="C:early endosome membrane"/>
    <property type="evidence" value="ECO:0007669"/>
    <property type="project" value="UniProtKB-SubCell"/>
</dbReference>
<dbReference type="GO" id="GO:0005783">
    <property type="term" value="C:endoplasmic reticulum"/>
    <property type="evidence" value="ECO:0000314"/>
    <property type="project" value="UniProtKB"/>
</dbReference>
<dbReference type="GO" id="GO:0005789">
    <property type="term" value="C:endoplasmic reticulum membrane"/>
    <property type="evidence" value="ECO:0007669"/>
    <property type="project" value="UniProtKB-SubCell"/>
</dbReference>
<dbReference type="GO" id="GO:0016020">
    <property type="term" value="C:membrane"/>
    <property type="evidence" value="ECO:0000314"/>
    <property type="project" value="UniProtKB"/>
</dbReference>
<dbReference type="GO" id="GO:0005886">
    <property type="term" value="C:plasma membrane"/>
    <property type="evidence" value="ECO:0000314"/>
    <property type="project" value="HPA"/>
</dbReference>
<dbReference type="GO" id="GO:0106235">
    <property type="term" value="F:ceramide-1-phosphate phosphatase activity"/>
    <property type="evidence" value="ECO:0000314"/>
    <property type="project" value="UniProtKB"/>
</dbReference>
<dbReference type="GO" id="GO:0008195">
    <property type="term" value="F:phosphatidate phosphatase activity"/>
    <property type="evidence" value="ECO:0000314"/>
    <property type="project" value="UniProtKB"/>
</dbReference>
<dbReference type="GO" id="GO:0042392">
    <property type="term" value="F:sphingosine-1-phosphate phosphatase activity"/>
    <property type="evidence" value="ECO:0000314"/>
    <property type="project" value="UniProtKB"/>
</dbReference>
<dbReference type="GO" id="GO:0006672">
    <property type="term" value="P:ceramide metabolic process"/>
    <property type="evidence" value="ECO:0000314"/>
    <property type="project" value="UniProtKB"/>
</dbReference>
<dbReference type="GO" id="GO:0046839">
    <property type="term" value="P:phospholipid dephosphorylation"/>
    <property type="evidence" value="ECO:0000314"/>
    <property type="project" value="UniProtKB"/>
</dbReference>
<dbReference type="GO" id="GO:0006644">
    <property type="term" value="P:phospholipid metabolic process"/>
    <property type="evidence" value="ECO:0000314"/>
    <property type="project" value="UniProtKB"/>
</dbReference>
<dbReference type="GO" id="GO:0007165">
    <property type="term" value="P:signal transduction"/>
    <property type="evidence" value="ECO:0000318"/>
    <property type="project" value="GO_Central"/>
</dbReference>
<dbReference type="GO" id="GO:0030149">
    <property type="term" value="P:sphingolipid catabolic process"/>
    <property type="evidence" value="ECO:0000304"/>
    <property type="project" value="Reactome"/>
</dbReference>
<dbReference type="GO" id="GO:0006670">
    <property type="term" value="P:sphingosine metabolic process"/>
    <property type="evidence" value="ECO:0000314"/>
    <property type="project" value="UniProtKB"/>
</dbReference>
<dbReference type="CDD" id="cd03384">
    <property type="entry name" value="PAP2_wunen"/>
    <property type="match status" value="1"/>
</dbReference>
<dbReference type="FunFam" id="1.20.144.10:FF:000016">
    <property type="entry name" value="Phospholipid phosphatase 2"/>
    <property type="match status" value="1"/>
</dbReference>
<dbReference type="Gene3D" id="1.20.144.10">
    <property type="entry name" value="Phosphatidic acid phosphatase type 2/haloperoxidase"/>
    <property type="match status" value="1"/>
</dbReference>
<dbReference type="InterPro" id="IPR036938">
    <property type="entry name" value="P_Acid_Pase_2/haloperoxi_sf"/>
</dbReference>
<dbReference type="InterPro" id="IPR000326">
    <property type="entry name" value="P_Acid_Pase_2/haloperoxidase"/>
</dbReference>
<dbReference type="InterPro" id="IPR043216">
    <property type="entry name" value="PA_PP_rel"/>
</dbReference>
<dbReference type="PANTHER" id="PTHR10165">
    <property type="entry name" value="LIPID PHOSPHATE PHOSPHATASE"/>
    <property type="match status" value="1"/>
</dbReference>
<dbReference type="PANTHER" id="PTHR10165:SF25">
    <property type="entry name" value="PHOSPHOLIPID PHOSPHATASE 2"/>
    <property type="match status" value="1"/>
</dbReference>
<dbReference type="Pfam" id="PF01569">
    <property type="entry name" value="PAP2"/>
    <property type="match status" value="1"/>
</dbReference>
<dbReference type="SMART" id="SM00014">
    <property type="entry name" value="acidPPc"/>
    <property type="match status" value="1"/>
</dbReference>
<dbReference type="SUPFAM" id="SSF48317">
    <property type="entry name" value="Acid phosphatase/Vanadium-dependent haloperoxidase"/>
    <property type="match status" value="1"/>
</dbReference>
<reference key="1">
    <citation type="journal article" date="1998" name="DNA Cell Biol.">
        <title>Molecular cloning of two alternatively spliced forms of human phosphatidic acid phosphatase cDNAs that are differentially expressed in normal and tumor cells.</title>
        <authorList>
            <person name="Leung D.W."/>
            <person name="Tompkins C.K."/>
            <person name="White T."/>
        </authorList>
    </citation>
    <scope>NUCLEOTIDE SEQUENCE [MRNA] (ISOFORM 1)</scope>
</reference>
<reference key="2">
    <citation type="journal article" date="1998" name="J. Biol. Chem.">
        <title>Human type 2 phosphatidic acid phosphohydrolases. Substrate specificity of the type 2a, 2b, and 2c enzymes and cell surface activity of the 2a isoform.</title>
        <authorList>
            <person name="Roberts R."/>
            <person name="Sciorra V.A."/>
            <person name="Morris A.J."/>
        </authorList>
    </citation>
    <scope>NUCLEOTIDE SEQUENCE [MRNA] (ISOFORM 1)</scope>
    <scope>FUNCTION</scope>
    <scope>CATALYTIC ACTIVITY</scope>
    <scope>BIOPHYSICOCHEMICAL PROPERTIES</scope>
    <scope>SUBSTRATE SPECIFICITY</scope>
    <scope>ACTIVITY REGULATION</scope>
    <scope>PATHWAY</scope>
    <scope>SUBCELLULAR LOCATION</scope>
    <scope>GLYCOSYLATION</scope>
</reference>
<reference key="3">
    <citation type="journal article" date="1998" name="FEBS Lett.">
        <title>Identification of a novel human phosphatidic acid phosphatase type 2 isoform.</title>
        <authorList>
            <person name="Hooks S.B."/>
            <person name="Ragan S.P."/>
            <person name="Lynch K.R."/>
        </authorList>
    </citation>
    <scope>NUCLEOTIDE SEQUENCE [MRNA] (ISOFORM 1)</scope>
    <scope>FUNCTION</scope>
    <scope>CATALYTIC ACTIVITY</scope>
    <scope>BIOPHYSICOCHEMICAL PROPERTIES</scope>
    <scope>SUBSTRATE SPECIFICITY</scope>
    <scope>PATHWAY</scope>
    <scope>ACTIVITY REGULATION</scope>
    <scope>TISSUE SPECIFICITY</scope>
</reference>
<reference key="4">
    <citation type="submission" date="2003-05" db="EMBL/GenBank/DDBJ databases">
        <title>Cloning of human full-length CDSs in BD Creator(TM) system donor vector.</title>
        <authorList>
            <person name="Kalnine N."/>
            <person name="Chen X."/>
            <person name="Rolfs A."/>
            <person name="Halleck A."/>
            <person name="Hines L."/>
            <person name="Eisenstein S."/>
            <person name="Koundinya M."/>
            <person name="Raphael J."/>
            <person name="Moreira D."/>
            <person name="Kelley T."/>
            <person name="LaBaer J."/>
            <person name="Lin Y."/>
            <person name="Phelan M."/>
            <person name="Farmer A."/>
        </authorList>
    </citation>
    <scope>NUCLEOTIDE SEQUENCE [LARGE SCALE MRNA] (ISOFORM 1)</scope>
</reference>
<reference key="5">
    <citation type="journal article" date="2004" name="Nature">
        <title>The DNA sequence and biology of human chromosome 19.</title>
        <authorList>
            <person name="Grimwood J."/>
            <person name="Gordon L.A."/>
            <person name="Olsen A.S."/>
            <person name="Terry A."/>
            <person name="Schmutz J."/>
            <person name="Lamerdin J.E."/>
            <person name="Hellsten U."/>
            <person name="Goodstein D."/>
            <person name="Couronne O."/>
            <person name="Tran-Gyamfi M."/>
            <person name="Aerts A."/>
            <person name="Altherr M."/>
            <person name="Ashworth L."/>
            <person name="Bajorek E."/>
            <person name="Black S."/>
            <person name="Branscomb E."/>
            <person name="Caenepeel S."/>
            <person name="Carrano A.V."/>
            <person name="Caoile C."/>
            <person name="Chan Y.M."/>
            <person name="Christensen M."/>
            <person name="Cleland C.A."/>
            <person name="Copeland A."/>
            <person name="Dalin E."/>
            <person name="Dehal P."/>
            <person name="Denys M."/>
            <person name="Detter J.C."/>
            <person name="Escobar J."/>
            <person name="Flowers D."/>
            <person name="Fotopulos D."/>
            <person name="Garcia C."/>
            <person name="Georgescu A.M."/>
            <person name="Glavina T."/>
            <person name="Gomez M."/>
            <person name="Gonzales E."/>
            <person name="Groza M."/>
            <person name="Hammon N."/>
            <person name="Hawkins T."/>
            <person name="Haydu L."/>
            <person name="Ho I."/>
            <person name="Huang W."/>
            <person name="Israni S."/>
            <person name="Jett J."/>
            <person name="Kadner K."/>
            <person name="Kimball H."/>
            <person name="Kobayashi A."/>
            <person name="Larionov V."/>
            <person name="Leem S.-H."/>
            <person name="Lopez F."/>
            <person name="Lou Y."/>
            <person name="Lowry S."/>
            <person name="Malfatti S."/>
            <person name="Martinez D."/>
            <person name="McCready P.M."/>
            <person name="Medina C."/>
            <person name="Morgan J."/>
            <person name="Nelson K."/>
            <person name="Nolan M."/>
            <person name="Ovcharenko I."/>
            <person name="Pitluck S."/>
            <person name="Pollard M."/>
            <person name="Popkie A.P."/>
            <person name="Predki P."/>
            <person name="Quan G."/>
            <person name="Ramirez L."/>
            <person name="Rash S."/>
            <person name="Retterer J."/>
            <person name="Rodriguez A."/>
            <person name="Rogers S."/>
            <person name="Salamov A."/>
            <person name="Salazar A."/>
            <person name="She X."/>
            <person name="Smith D."/>
            <person name="Slezak T."/>
            <person name="Solovyev V."/>
            <person name="Thayer N."/>
            <person name="Tice H."/>
            <person name="Tsai M."/>
            <person name="Ustaszewska A."/>
            <person name="Vo N."/>
            <person name="Wagner M."/>
            <person name="Wheeler J."/>
            <person name="Wu K."/>
            <person name="Xie G."/>
            <person name="Yang J."/>
            <person name="Dubchak I."/>
            <person name="Furey T.S."/>
            <person name="DeJong P."/>
            <person name="Dickson M."/>
            <person name="Gordon D."/>
            <person name="Eichler E.E."/>
            <person name="Pennacchio L.A."/>
            <person name="Richardson P."/>
            <person name="Stubbs L."/>
            <person name="Rokhsar D.S."/>
            <person name="Myers R.M."/>
            <person name="Rubin E.M."/>
            <person name="Lucas S.M."/>
        </authorList>
    </citation>
    <scope>NUCLEOTIDE SEQUENCE [LARGE SCALE GENOMIC DNA]</scope>
</reference>
<reference key="6">
    <citation type="journal article" date="2004" name="Genome Res.">
        <title>The status, quality, and expansion of the NIH full-length cDNA project: the Mammalian Gene Collection (MGC).</title>
        <authorList>
            <consortium name="The MGC Project Team"/>
        </authorList>
    </citation>
    <scope>NUCLEOTIDE SEQUENCE [LARGE SCALE MRNA] (ISOFORM 1)</scope>
    <source>
        <tissue>Ovary</tissue>
    </source>
</reference>
<reference key="7">
    <citation type="journal article" date="2006" name="J. Biol. Chem.">
        <title>Lipid phosphate phosphatase-2 activity regulates S-phase entry of the cell cycle in Rat2 fibroblasts.</title>
        <authorList>
            <person name="Morris K.E."/>
            <person name="Schang L.M."/>
            <person name="Brindley D.N."/>
        </authorList>
    </citation>
    <scope>FUNCTION</scope>
    <scope>CATALYTIC ACTIVITY</scope>
    <scope>PATHWAY</scope>
    <scope>SUBCELLULAR LOCATION</scope>
    <scope>MUTAGENESIS OF ARG-214</scope>
</reference>
<reference key="8">
    <citation type="journal article" date="2008" name="Biochem. J.">
        <title>Lipid phosphate phosphatases form homo- and hetero-oligomers: catalytic competency, subcellular distribution and function.</title>
        <authorList>
            <person name="Long J.S."/>
            <person name="Pyne N.J."/>
            <person name="Pyne S."/>
        </authorList>
    </citation>
    <scope>SUBUNIT</scope>
</reference>
<proteinExistence type="evidence at protein level"/>
<keyword id="KW-0025">Alternative splicing</keyword>
<keyword id="KW-1003">Cell membrane</keyword>
<keyword id="KW-0256">Endoplasmic reticulum</keyword>
<keyword id="KW-0967">Endosome</keyword>
<keyword id="KW-0325">Glycoprotein</keyword>
<keyword id="KW-0378">Hydrolase</keyword>
<keyword id="KW-0443">Lipid metabolism</keyword>
<keyword id="KW-0472">Membrane</keyword>
<keyword id="KW-1267">Proteomics identification</keyword>
<keyword id="KW-1185">Reference proteome</keyword>
<keyword id="KW-0812">Transmembrane</keyword>
<keyword id="KW-1133">Transmembrane helix</keyword>
<evidence type="ECO:0000250" key="1">
    <source>
        <dbReference type="UniProtKB" id="O34349"/>
    </source>
</evidence>
<evidence type="ECO:0000250" key="2">
    <source>
        <dbReference type="UniProtKB" id="Q8K593"/>
    </source>
</evidence>
<evidence type="ECO:0000255" key="3"/>
<evidence type="ECO:0000269" key="4">
    <source>
    </source>
</evidence>
<evidence type="ECO:0000269" key="5">
    <source>
    </source>
</evidence>
<evidence type="ECO:0000269" key="6">
    <source>
    </source>
</evidence>
<evidence type="ECO:0000269" key="7">
    <source>
    </source>
</evidence>
<evidence type="ECO:0000303" key="8">
    <source>
    </source>
</evidence>
<evidence type="ECO:0000305" key="9"/>
<evidence type="ECO:0000305" key="10">
    <source>
    </source>
</evidence>
<evidence type="ECO:0000305" key="11">
    <source>
    </source>
</evidence>
<evidence type="ECO:0000305" key="12">
    <source>
    </source>
</evidence>
<evidence type="ECO:0000312" key="13">
    <source>
        <dbReference type="HGNC" id="HGNC:9230"/>
    </source>
</evidence>
<accession>O43688</accession>
<accession>A6NLV0</accession>
<accession>E9PAY8</accession>
<feature type="chain" id="PRO_0000220909" description="Phospholipid phosphatase 2">
    <location>
        <begin position="1"/>
        <end position="288"/>
    </location>
</feature>
<feature type="topological domain" description="Cytoplasmic" evidence="3">
    <location>
        <begin position="1"/>
        <end position="4"/>
    </location>
</feature>
<feature type="transmembrane region" description="Helical" evidence="3">
    <location>
        <begin position="5"/>
        <end position="25"/>
    </location>
</feature>
<feature type="topological domain" description="Lumenal" evidence="3">
    <location>
        <begin position="26"/>
        <end position="51"/>
    </location>
</feature>
<feature type="transmembrane region" description="Helical" evidence="3">
    <location>
        <begin position="52"/>
        <end position="72"/>
    </location>
</feature>
<feature type="topological domain" description="Cytoplasmic" evidence="3">
    <location>
        <begin position="73"/>
        <end position="87"/>
    </location>
</feature>
<feature type="transmembrane region" description="Helical" evidence="3">
    <location>
        <begin position="88"/>
        <end position="108"/>
    </location>
</feature>
<feature type="topological domain" description="Lumenal" evidence="3">
    <location>
        <begin position="109"/>
        <end position="162"/>
    </location>
</feature>
<feature type="transmembrane region" description="Helical" evidence="3">
    <location>
        <begin position="163"/>
        <end position="183"/>
    </location>
</feature>
<feature type="topological domain" description="Cytoplasmic" evidence="3">
    <location>
        <begin position="184"/>
        <end position="196"/>
    </location>
</feature>
<feature type="transmembrane region" description="Helical" evidence="3">
    <location>
        <begin position="197"/>
        <end position="217"/>
    </location>
</feature>
<feature type="topological domain" description="Lumenal" evidence="3">
    <location>
        <begin position="218"/>
        <end position="226"/>
    </location>
</feature>
<feature type="transmembrane region" description="Helical" evidence="3">
    <location>
        <begin position="227"/>
        <end position="247"/>
    </location>
</feature>
<feature type="topological domain" description="Cytoplasmic" evidence="3">
    <location>
        <begin position="248"/>
        <end position="288"/>
    </location>
</feature>
<feature type="region of interest" description="Phosphatase sequence motif I" evidence="1">
    <location>
        <begin position="117"/>
        <end position="125"/>
    </location>
</feature>
<feature type="region of interest" description="Phosphatase sequence motif II" evidence="1">
    <location>
        <begin position="165"/>
        <end position="168"/>
    </location>
</feature>
<feature type="region of interest" description="Phosphatase sequence motif III" evidence="1">
    <location>
        <begin position="213"/>
        <end position="224"/>
    </location>
</feature>
<feature type="active site" description="Proton donors" evidence="1">
    <location>
        <position position="168"/>
    </location>
</feature>
<feature type="active site" description="Nucleophile" evidence="1">
    <location>
        <position position="220"/>
    </location>
</feature>
<feature type="site" description="Stabilizes the active site histidine for nucleophilic attack" evidence="1">
    <location>
        <position position="224"/>
    </location>
</feature>
<feature type="glycosylation site" description="N-linked (GlcNAc...) asparagine" evidence="3">
    <location>
        <position position="139"/>
    </location>
</feature>
<feature type="splice variant" id="VSP_047366" description="In isoform 3." evidence="9">
    <location>
        <begin position="1"/>
        <end position="56"/>
    </location>
</feature>
<feature type="splice variant" id="VSP_037765" description="In isoform 2." evidence="9">
    <original>MQRRWVFVLLDVLCLLV</original>
    <variation>MGVARGPGSRGQHPPPRQQEVCAEGPRARLHPAPPGLG</variation>
    <location>
        <begin position="1"/>
        <end position="17"/>
    </location>
</feature>
<feature type="sequence variant" id="VAR_061541" description="In dbSNP:rs1138439.">
    <original>A</original>
    <variation>V</variation>
    <location>
        <position position="180"/>
    </location>
</feature>
<feature type="mutagenesis site" description="Loss of lipid phosphatase activity." evidence="4">
    <original>R</original>
    <variation>K</variation>
    <location>
        <position position="214"/>
    </location>
</feature>
<gene>
    <name evidence="13" type="primary">PLPP2</name>
    <name type="synonym">LPP2</name>
    <name evidence="8" type="synonym">PPAP2C</name>
</gene>
<organism>
    <name type="scientific">Homo sapiens</name>
    <name type="common">Human</name>
    <dbReference type="NCBI Taxonomy" id="9606"/>
    <lineage>
        <taxon>Eukaryota</taxon>
        <taxon>Metazoa</taxon>
        <taxon>Chordata</taxon>
        <taxon>Craniata</taxon>
        <taxon>Vertebrata</taxon>
        <taxon>Euteleostomi</taxon>
        <taxon>Mammalia</taxon>
        <taxon>Eutheria</taxon>
        <taxon>Euarchontoglires</taxon>
        <taxon>Primates</taxon>
        <taxon>Haplorrhini</taxon>
        <taxon>Catarrhini</taxon>
        <taxon>Hominidae</taxon>
        <taxon>Homo</taxon>
    </lineage>
</organism>